<accession>Q9KLC2</accession>
<sequence length="411" mass="44670">MDIFKHHESQVQSYANHFPVLFGTAKGSWLYSQQGDAYLDFLSGAGALNYGHNNAVLKQALLEYIERDGLTHGLDMHSEAKAHFIQALQTHILEPRGLNYKLQFTGPTGTNAVEAALKLARKVTGRHNVVTFTNGFHGCSLGALAATGNQHHRQGAGLALSGVYRVPYDGYAGVDGLTLFETMLQDNSSGLDKPAAVLLETVQGEGGLNVASDAWLQRVQAICRAQQILLIVDDIQAGCGRTGTFFSFEPSGIEPDMVTLSKSLSGYGLPMALVLFKPEWDQWKPGEHNGTFRGNNHAFVTATRALEAYWANQDFQTHIAARSEQVTQALLQCLSRYPTLFSGLKGRGLMQGLACHNGDIARDIAALCFQKGLIIETAGAEDEVLKVFCPLTITEADLAHGLTIIERVLLE</sequence>
<proteinExistence type="inferred from homology"/>
<comment type="function">
    <text evidence="1">Catalyzes reversively the conversion of L-aspartate beta-semialdehyde (ASA) to L-2,4-diaminobutyrate (DABA) by transamination with L-glutamate.</text>
</comment>
<comment type="catalytic activity">
    <reaction>
        <text>L-2,4-diaminobutanoate + 2-oxoglutarate = L-aspartate 4-semialdehyde + L-glutamate</text>
        <dbReference type="Rhea" id="RHEA:11160"/>
        <dbReference type="ChEBI" id="CHEBI:16810"/>
        <dbReference type="ChEBI" id="CHEBI:29985"/>
        <dbReference type="ChEBI" id="CHEBI:58761"/>
        <dbReference type="ChEBI" id="CHEBI:537519"/>
        <dbReference type="EC" id="2.6.1.76"/>
    </reaction>
</comment>
<comment type="cofactor">
    <cofactor evidence="1">
        <name>pyridoxal 5'-phosphate</name>
        <dbReference type="ChEBI" id="CHEBI:597326"/>
    </cofactor>
</comment>
<comment type="pathway">
    <text>Amine and polyamine biosynthesis; ectoine biosynthesis; L-ectoine from L-aspartate 4-semialdehyde: step 1/3.</text>
</comment>
<comment type="similarity">
    <text evidence="3">Belongs to the class-III pyridoxal-phosphate-dependent aminotransferase family.</text>
</comment>
<gene>
    <name type="primary">ectB</name>
    <name type="ordered locus">VC_A0824</name>
</gene>
<feature type="chain" id="PRO_0000120530" description="Diaminobutyrate--2-oxoglutarate transaminase">
    <location>
        <begin position="1"/>
        <end position="411"/>
    </location>
</feature>
<feature type="modified residue" description="N6-(pyridoxal phosphate)lysine" evidence="2">
    <location>
        <position position="262"/>
    </location>
</feature>
<protein>
    <recommendedName>
        <fullName>Diaminobutyrate--2-oxoglutarate transaminase</fullName>
        <ecNumber>2.6.1.76</ecNumber>
    </recommendedName>
    <alternativeName>
        <fullName>DABA aminotransferase</fullName>
    </alternativeName>
    <alternativeName>
        <fullName>Diaminobutyrate--2-oxoglutarate aminotransferase</fullName>
    </alternativeName>
    <alternativeName>
        <fullName>L-2,4-diaminobutyric acid transaminase</fullName>
    </alternativeName>
</protein>
<evidence type="ECO:0000250" key="1"/>
<evidence type="ECO:0000255" key="2"/>
<evidence type="ECO:0000305" key="3"/>
<name>ECTB_VIBCH</name>
<keyword id="KW-0032">Aminotransferase</keyword>
<keyword id="KW-0663">Pyridoxal phosphate</keyword>
<keyword id="KW-1185">Reference proteome</keyword>
<keyword id="KW-0808">Transferase</keyword>
<organism>
    <name type="scientific">Vibrio cholerae serotype O1 (strain ATCC 39315 / El Tor Inaba N16961)</name>
    <dbReference type="NCBI Taxonomy" id="243277"/>
    <lineage>
        <taxon>Bacteria</taxon>
        <taxon>Pseudomonadati</taxon>
        <taxon>Pseudomonadota</taxon>
        <taxon>Gammaproteobacteria</taxon>
        <taxon>Vibrionales</taxon>
        <taxon>Vibrionaceae</taxon>
        <taxon>Vibrio</taxon>
    </lineage>
</organism>
<reference key="1">
    <citation type="journal article" date="2000" name="Nature">
        <title>DNA sequence of both chromosomes of the cholera pathogen Vibrio cholerae.</title>
        <authorList>
            <person name="Heidelberg J.F."/>
            <person name="Eisen J.A."/>
            <person name="Nelson W.C."/>
            <person name="Clayton R.A."/>
            <person name="Gwinn M.L."/>
            <person name="Dodson R.J."/>
            <person name="Haft D.H."/>
            <person name="Hickey E.K."/>
            <person name="Peterson J.D."/>
            <person name="Umayam L.A."/>
            <person name="Gill S.R."/>
            <person name="Nelson K.E."/>
            <person name="Read T.D."/>
            <person name="Tettelin H."/>
            <person name="Richardson D.L."/>
            <person name="Ermolaeva M.D."/>
            <person name="Vamathevan J.J."/>
            <person name="Bass S."/>
            <person name="Qin H."/>
            <person name="Dragoi I."/>
            <person name="Sellers P."/>
            <person name="McDonald L.A."/>
            <person name="Utterback T.R."/>
            <person name="Fleischmann R.D."/>
            <person name="Nierman W.C."/>
            <person name="White O."/>
            <person name="Salzberg S.L."/>
            <person name="Smith H.O."/>
            <person name="Colwell R.R."/>
            <person name="Mekalanos J.J."/>
            <person name="Venter J.C."/>
            <person name="Fraser C.M."/>
        </authorList>
    </citation>
    <scope>NUCLEOTIDE SEQUENCE [LARGE SCALE GENOMIC DNA]</scope>
    <source>
        <strain>ATCC 39315 / El Tor Inaba N16961</strain>
    </source>
</reference>
<dbReference type="EC" id="2.6.1.76"/>
<dbReference type="EMBL" id="AE003853">
    <property type="protein sequence ID" value="AAF96722.1"/>
    <property type="molecule type" value="Genomic_DNA"/>
</dbReference>
<dbReference type="PIR" id="H82412">
    <property type="entry name" value="H82412"/>
</dbReference>
<dbReference type="RefSeq" id="NP_233210.1">
    <property type="nucleotide sequence ID" value="NC_002506.1"/>
</dbReference>
<dbReference type="SMR" id="Q9KLC2"/>
<dbReference type="STRING" id="243277.VC_A0824"/>
<dbReference type="DNASU" id="2612355"/>
<dbReference type="EnsemblBacteria" id="AAF96722">
    <property type="protein sequence ID" value="AAF96722"/>
    <property type="gene ID" value="VC_A0824"/>
</dbReference>
<dbReference type="KEGG" id="vch:VC_A0824"/>
<dbReference type="PATRIC" id="fig|243277.26.peg.3444"/>
<dbReference type="eggNOG" id="COG0160">
    <property type="taxonomic scope" value="Bacteria"/>
</dbReference>
<dbReference type="HOGENOM" id="CLU_016922_10_0_6"/>
<dbReference type="UniPathway" id="UPA00067">
    <property type="reaction ID" value="UER00121"/>
</dbReference>
<dbReference type="Proteomes" id="UP000000584">
    <property type="component" value="Chromosome 2"/>
</dbReference>
<dbReference type="GO" id="GO:0045303">
    <property type="term" value="F:diaminobutyrate-2-oxoglutarate transaminase activity"/>
    <property type="evidence" value="ECO:0007669"/>
    <property type="project" value="UniProtKB-EC"/>
</dbReference>
<dbReference type="GO" id="GO:0047307">
    <property type="term" value="F:diaminobutyrate-pyruvate transaminase activity"/>
    <property type="evidence" value="ECO:0007669"/>
    <property type="project" value="InterPro"/>
</dbReference>
<dbReference type="GO" id="GO:0030170">
    <property type="term" value="F:pyridoxal phosphate binding"/>
    <property type="evidence" value="ECO:0007669"/>
    <property type="project" value="InterPro"/>
</dbReference>
<dbReference type="GO" id="GO:0008483">
    <property type="term" value="F:transaminase activity"/>
    <property type="evidence" value="ECO:0000318"/>
    <property type="project" value="GO_Central"/>
</dbReference>
<dbReference type="GO" id="GO:0019491">
    <property type="term" value="P:ectoine biosynthetic process"/>
    <property type="evidence" value="ECO:0007669"/>
    <property type="project" value="UniProtKB-UniPathway"/>
</dbReference>
<dbReference type="CDD" id="cd00610">
    <property type="entry name" value="OAT_like"/>
    <property type="match status" value="1"/>
</dbReference>
<dbReference type="Gene3D" id="3.90.1150.10">
    <property type="entry name" value="Aspartate Aminotransferase, domain 1"/>
    <property type="match status" value="1"/>
</dbReference>
<dbReference type="Gene3D" id="3.40.640.10">
    <property type="entry name" value="Type I PLP-dependent aspartate aminotransferase-like (Major domain)"/>
    <property type="match status" value="1"/>
</dbReference>
<dbReference type="InterPro" id="IPR005814">
    <property type="entry name" value="Aminotrans_3"/>
</dbReference>
<dbReference type="InterPro" id="IPR049704">
    <property type="entry name" value="Aminotrans_3_PPA_site"/>
</dbReference>
<dbReference type="InterPro" id="IPR004637">
    <property type="entry name" value="Dat"/>
</dbReference>
<dbReference type="InterPro" id="IPR012773">
    <property type="entry name" value="Ectoine_EctB"/>
</dbReference>
<dbReference type="InterPro" id="IPR015424">
    <property type="entry name" value="PyrdxlP-dep_Trfase"/>
</dbReference>
<dbReference type="InterPro" id="IPR015421">
    <property type="entry name" value="PyrdxlP-dep_Trfase_major"/>
</dbReference>
<dbReference type="InterPro" id="IPR015422">
    <property type="entry name" value="PyrdxlP-dep_Trfase_small"/>
</dbReference>
<dbReference type="NCBIfam" id="TIGR00709">
    <property type="entry name" value="dat"/>
    <property type="match status" value="1"/>
</dbReference>
<dbReference type="NCBIfam" id="TIGR02407">
    <property type="entry name" value="ectoine_ectB"/>
    <property type="match status" value="1"/>
</dbReference>
<dbReference type="NCBIfam" id="NF006733">
    <property type="entry name" value="PRK09264.1"/>
    <property type="match status" value="1"/>
</dbReference>
<dbReference type="PANTHER" id="PTHR43552">
    <property type="entry name" value="DIAMINOBUTYRATE--2-OXOGLUTARATE AMINOTRANSFERASE"/>
    <property type="match status" value="1"/>
</dbReference>
<dbReference type="PANTHER" id="PTHR43552:SF2">
    <property type="entry name" value="DIAMINOBUTYRATE--2-OXOGLUTARATE TRANSAMINASE"/>
    <property type="match status" value="1"/>
</dbReference>
<dbReference type="Pfam" id="PF00202">
    <property type="entry name" value="Aminotran_3"/>
    <property type="match status" value="1"/>
</dbReference>
<dbReference type="PIRSF" id="PIRSF000521">
    <property type="entry name" value="Transaminase_4ab_Lys_Orn"/>
    <property type="match status" value="1"/>
</dbReference>
<dbReference type="SUPFAM" id="SSF53383">
    <property type="entry name" value="PLP-dependent transferases"/>
    <property type="match status" value="1"/>
</dbReference>
<dbReference type="PROSITE" id="PS00600">
    <property type="entry name" value="AA_TRANSFER_CLASS_3"/>
    <property type="match status" value="1"/>
</dbReference>